<reference key="1">
    <citation type="journal article" date="1995" name="Virology">
        <title>Analysis of the complete nucleotide sequence of African swine fever virus.</title>
        <authorList>
            <person name="Yanez R.J."/>
            <person name="Rodriguez J.M."/>
            <person name="Nogal M.L."/>
            <person name="Yuste L."/>
            <person name="Enriquez C."/>
            <person name="Rodriguez J.F."/>
            <person name="Vinuela E."/>
        </authorList>
    </citation>
    <scope>NUCLEOTIDE SEQUENCE [LARGE SCALE GENOMIC DNA]</scope>
</reference>
<reference key="2">
    <citation type="journal article" date="2013" name="Virus Res.">
        <title>African swine fever virus transcription.</title>
        <authorList>
            <person name="Rodriguez J.M."/>
            <person name="Salas M.L."/>
        </authorList>
    </citation>
    <scope>REVIEW</scope>
</reference>
<reference key="3">
    <citation type="journal article" date="2020" name="Biochem. Soc. Trans.">
        <title>Transcriptome view of a killer: African swine fever virus.</title>
        <authorList>
            <person name="Cackett G."/>
            <person name="Sykora M."/>
            <person name="Werner F."/>
        </authorList>
    </citation>
    <scope>REVIEW</scope>
</reference>
<keyword id="KW-0002">3D-structure</keyword>
<keyword id="KW-0240">DNA-directed RNA polymerase</keyword>
<keyword id="KW-1035">Host cytoplasm</keyword>
<keyword id="KW-0479">Metal-binding</keyword>
<keyword id="KW-1185">Reference proteome</keyword>
<keyword id="KW-0804">Transcription</keyword>
<keyword id="KW-1195">Viral transcription</keyword>
<keyword id="KW-0862">Zinc</keyword>
<proteinExistence type="evidence at protein level"/>
<dbReference type="EMBL" id="U18466">
    <property type="protein sequence ID" value="AAA65324.1"/>
    <property type="molecule type" value="Genomic_DNA"/>
</dbReference>
<dbReference type="RefSeq" id="NP_042788.1">
    <property type="nucleotide sequence ID" value="NC_001659.2"/>
</dbReference>
<dbReference type="PDB" id="8Q3B">
    <property type="method" value="EM"/>
    <property type="resolution" value="2.69 A"/>
    <property type="chains" value="J=1-80"/>
</dbReference>
<dbReference type="PDB" id="8Q3K">
    <property type="method" value="EM"/>
    <property type="resolution" value="2.92 A"/>
    <property type="chains" value="J=1-80"/>
</dbReference>
<dbReference type="PDB" id="8XX4">
    <property type="method" value="EM"/>
    <property type="resolution" value="2.60 A"/>
    <property type="chains" value="H=1-80"/>
</dbReference>
<dbReference type="PDB" id="8XX5">
    <property type="method" value="EM"/>
    <property type="resolution" value="2.40 A"/>
    <property type="chains" value="H=1-80"/>
</dbReference>
<dbReference type="PDB" id="8XXP">
    <property type="method" value="EM"/>
    <property type="resolution" value="2.60 A"/>
    <property type="chains" value="H=1-80"/>
</dbReference>
<dbReference type="PDB" id="8XXT">
    <property type="method" value="EM"/>
    <property type="resolution" value="2.85 A"/>
    <property type="chains" value="H=1-80"/>
</dbReference>
<dbReference type="PDB" id="8XY6">
    <property type="method" value="EM"/>
    <property type="resolution" value="3.00 A"/>
    <property type="chains" value="H=1-80"/>
</dbReference>
<dbReference type="PDB" id="8Y0E">
    <property type="method" value="EM"/>
    <property type="resolution" value="3.00 A"/>
    <property type="chains" value="H=1-80"/>
</dbReference>
<dbReference type="PDB" id="8YQT">
    <property type="method" value="EM"/>
    <property type="resolution" value="2.56 A"/>
    <property type="chains" value="H=1-80"/>
</dbReference>
<dbReference type="PDB" id="8YQU">
    <property type="method" value="EM"/>
    <property type="resolution" value="2.85 A"/>
    <property type="chains" value="H=1-80"/>
</dbReference>
<dbReference type="PDB" id="8YQV">
    <property type="method" value="EM"/>
    <property type="resolution" value="2.67 A"/>
    <property type="chains" value="H=1-80"/>
</dbReference>
<dbReference type="PDB" id="8YQW">
    <property type="method" value="EM"/>
    <property type="resolution" value="2.68 A"/>
    <property type="chains" value="H=1-80"/>
</dbReference>
<dbReference type="PDB" id="8YQY">
    <property type="method" value="EM"/>
    <property type="resolution" value="3.68 A"/>
    <property type="chains" value="H=1-80"/>
</dbReference>
<dbReference type="PDB" id="8YQZ">
    <property type="method" value="EM"/>
    <property type="resolution" value="2.78 A"/>
    <property type="chains" value="H=1-80"/>
</dbReference>
<dbReference type="PDBsum" id="8Q3B"/>
<dbReference type="PDBsum" id="8Q3K"/>
<dbReference type="PDBsum" id="8XX4"/>
<dbReference type="PDBsum" id="8XX5"/>
<dbReference type="PDBsum" id="8XXP"/>
<dbReference type="PDBsum" id="8XXT"/>
<dbReference type="PDBsum" id="8XY6"/>
<dbReference type="PDBsum" id="8Y0E"/>
<dbReference type="PDBsum" id="8YQT"/>
<dbReference type="PDBsum" id="8YQU"/>
<dbReference type="PDBsum" id="8YQV"/>
<dbReference type="PDBsum" id="8YQW"/>
<dbReference type="PDBsum" id="8YQY"/>
<dbReference type="PDBsum" id="8YQZ"/>
<dbReference type="EMDB" id="EMD-18120"/>
<dbReference type="EMDB" id="EMD-18129"/>
<dbReference type="SMR" id="P42488"/>
<dbReference type="GeneID" id="22220324"/>
<dbReference type="KEGG" id="vg:22220324"/>
<dbReference type="Proteomes" id="UP000000624">
    <property type="component" value="Segment"/>
</dbReference>
<dbReference type="GO" id="GO:0000428">
    <property type="term" value="C:DNA-directed RNA polymerase complex"/>
    <property type="evidence" value="ECO:0007669"/>
    <property type="project" value="UniProtKB-KW"/>
</dbReference>
<dbReference type="GO" id="GO:0030430">
    <property type="term" value="C:host cell cytoplasm"/>
    <property type="evidence" value="ECO:0007669"/>
    <property type="project" value="UniProtKB-SubCell"/>
</dbReference>
<dbReference type="GO" id="GO:0003677">
    <property type="term" value="F:DNA binding"/>
    <property type="evidence" value="ECO:0007669"/>
    <property type="project" value="InterPro"/>
</dbReference>
<dbReference type="GO" id="GO:0003899">
    <property type="term" value="F:DNA-directed RNA polymerase activity"/>
    <property type="evidence" value="ECO:0007669"/>
    <property type="project" value="InterPro"/>
</dbReference>
<dbReference type="GO" id="GO:0008270">
    <property type="term" value="F:zinc ion binding"/>
    <property type="evidence" value="ECO:0007669"/>
    <property type="project" value="InterPro"/>
</dbReference>
<dbReference type="GO" id="GO:0006351">
    <property type="term" value="P:DNA-templated transcription"/>
    <property type="evidence" value="ECO:0007669"/>
    <property type="project" value="InterPro"/>
</dbReference>
<dbReference type="GO" id="GO:0019083">
    <property type="term" value="P:viral transcription"/>
    <property type="evidence" value="ECO:0007669"/>
    <property type="project" value="UniProtKB-KW"/>
</dbReference>
<dbReference type="Gene3D" id="1.10.10.60">
    <property type="entry name" value="Homeodomain-like"/>
    <property type="match status" value="1"/>
</dbReference>
<dbReference type="InterPro" id="IPR023580">
    <property type="entry name" value="RNA_pol_su_RPB10"/>
</dbReference>
<dbReference type="InterPro" id="IPR020789">
    <property type="entry name" value="RNA_pol_suN_Zn-BS"/>
</dbReference>
<dbReference type="InterPro" id="IPR000268">
    <property type="entry name" value="RPABC5/Rpb10"/>
</dbReference>
<dbReference type="Pfam" id="PF01194">
    <property type="entry name" value="RNA_pol_N"/>
    <property type="match status" value="1"/>
</dbReference>
<dbReference type="SUPFAM" id="SSF46924">
    <property type="entry name" value="RNA polymerase subunit RPB10"/>
    <property type="match status" value="1"/>
</dbReference>
<dbReference type="PROSITE" id="PS01112">
    <property type="entry name" value="RNA_POL_N_8KD"/>
    <property type="match status" value="1"/>
</dbReference>
<gene>
    <name type="ordered locus">Ba71V-95</name>
    <name type="ORF">CP80R</name>
</gene>
<organism>
    <name type="scientific">African swine fever virus (strain Badajoz 1971 Vero-adapted)</name>
    <name type="common">Ba71V</name>
    <name type="synonym">ASFV</name>
    <dbReference type="NCBI Taxonomy" id="10498"/>
    <lineage>
        <taxon>Viruses</taxon>
        <taxon>Varidnaviria</taxon>
        <taxon>Bamfordvirae</taxon>
        <taxon>Nucleocytoviricota</taxon>
        <taxon>Pokkesviricetes</taxon>
        <taxon>Asfuvirales</taxon>
        <taxon>Asfarviridae</taxon>
        <taxon>Asfivirus</taxon>
        <taxon>African swine fever virus</taxon>
    </lineage>
</organism>
<feature type="chain" id="PRO_0000121343" description="DNA-directed RNA polymerase RPB10 homolog">
    <location>
        <begin position="1"/>
        <end position="80"/>
    </location>
</feature>
<feature type="binding site" evidence="1">
    <location>
        <position position="7"/>
    </location>
    <ligand>
        <name>Zn(2+)</name>
        <dbReference type="ChEBI" id="CHEBI:29105"/>
    </ligand>
</feature>
<feature type="binding site" evidence="1">
    <location>
        <position position="10"/>
    </location>
    <ligand>
        <name>Zn(2+)</name>
        <dbReference type="ChEBI" id="CHEBI:29105"/>
    </ligand>
</feature>
<feature type="binding site" evidence="1">
    <location>
        <position position="65"/>
    </location>
    <ligand>
        <name>Zn(2+)</name>
        <dbReference type="ChEBI" id="CHEBI:29105"/>
    </ligand>
</feature>
<feature type="binding site" evidence="1">
    <location>
        <position position="66"/>
    </location>
    <ligand>
        <name>Zn(2+)</name>
        <dbReference type="ChEBI" id="CHEBI:29105"/>
    </ligand>
</feature>
<feature type="turn" evidence="5">
    <location>
        <begin position="8"/>
        <end position="10"/>
    </location>
</feature>
<feature type="helix" evidence="5">
    <location>
        <begin position="15"/>
        <end position="32"/>
    </location>
</feature>
<feature type="turn" evidence="6">
    <location>
        <begin position="34"/>
        <end position="36"/>
    </location>
</feature>
<feature type="helix" evidence="5">
    <location>
        <begin position="43"/>
        <end position="46"/>
    </location>
</feature>
<feature type="helix" evidence="5">
    <location>
        <begin position="52"/>
        <end position="58"/>
    </location>
</feature>
<feature type="helix" evidence="5">
    <location>
        <begin position="64"/>
        <end position="72"/>
    </location>
</feature>
<feature type="helix" evidence="5">
    <location>
        <begin position="76"/>
        <end position="79"/>
    </location>
</feature>
<protein>
    <recommendedName>
        <fullName evidence="2 3">DNA-directed RNA polymerase RPB10 homolog</fullName>
        <shortName evidence="4">RPB10 homolog</shortName>
    </recommendedName>
</protein>
<organismHost>
    <name type="scientific">Ornithodoros</name>
    <name type="common">relapsing fever ticks</name>
    <dbReference type="NCBI Taxonomy" id="6937"/>
</organismHost>
<organismHost>
    <name type="scientific">Sus scrofa</name>
    <name type="common">Pig</name>
    <dbReference type="NCBI Taxonomy" id="9823"/>
</organismHost>
<evidence type="ECO:0000250" key="1">
    <source>
        <dbReference type="UniProtKB" id="P22139"/>
    </source>
</evidence>
<evidence type="ECO:0000303" key="2">
    <source>
    </source>
</evidence>
<evidence type="ECO:0000303" key="3">
    <source>
    </source>
</evidence>
<evidence type="ECO:0000305" key="4"/>
<evidence type="ECO:0007829" key="5">
    <source>
        <dbReference type="PDB" id="8Q3B"/>
    </source>
</evidence>
<evidence type="ECO:0007829" key="6">
    <source>
        <dbReference type="PDB" id="8Q3K"/>
    </source>
</evidence>
<comment type="function">
    <text evidence="1">Component of the DNA-directed RNA polymerase (RNAP) that catalyzes the transcription in the cytoplasm of viral DNA into RNA using the four ribonucleoside triphosphates as substrates.</text>
</comment>
<comment type="subunit">
    <text evidence="3">Part of the viral DNA-directed RNA polymerase that consists of 8 polII-like subunits (RPB1, RPB2, RPB3, RPB5, RPB6, RPB7, RPB9, RPB10), a capping enzyme and a termination factor.</text>
</comment>
<comment type="subcellular location">
    <subcellularLocation>
        <location evidence="4">Host cytoplasm</location>
    </subcellularLocation>
</comment>
<comment type="similarity">
    <text evidence="4">Belongs to the archaeal RpoN/eukaryotic RPB10 RNA polymerase subunit family.</text>
</comment>
<accession>P42488</accession>
<name>RPB10_ASFB7</name>
<sequence length="80" mass="9089">MLIPVVCFTCGFPIGTYAAIFDKARTEYIKTKMDGTLPQNIPLDASLQIELKDLITALGIPMRVCCRTHLITTLDYRKYY</sequence>